<dbReference type="EMBL" id="CP001120">
    <property type="protein sequence ID" value="ACF66344.1"/>
    <property type="molecule type" value="Genomic_DNA"/>
</dbReference>
<dbReference type="SMR" id="B4TC72"/>
<dbReference type="KEGG" id="seh:SeHA_C0945"/>
<dbReference type="HOGENOM" id="CLU_018816_6_3_6"/>
<dbReference type="Proteomes" id="UP000001866">
    <property type="component" value="Chromosome"/>
</dbReference>
<dbReference type="GO" id="GO:0042597">
    <property type="term" value="C:periplasmic space"/>
    <property type="evidence" value="ECO:0007669"/>
    <property type="project" value="UniProtKB-SubCell"/>
</dbReference>
<dbReference type="FunFam" id="1.10.287.470:FF:000004">
    <property type="entry name" value="UPF0194 membrane protein YbhG"/>
    <property type="match status" value="1"/>
</dbReference>
<dbReference type="FunFam" id="2.40.50.100:FF:000025">
    <property type="entry name" value="UPF0194 membrane protein YbhG"/>
    <property type="match status" value="1"/>
</dbReference>
<dbReference type="Gene3D" id="2.40.30.170">
    <property type="match status" value="1"/>
</dbReference>
<dbReference type="Gene3D" id="2.40.50.100">
    <property type="match status" value="2"/>
</dbReference>
<dbReference type="Gene3D" id="1.10.287.470">
    <property type="entry name" value="Helix hairpin bin"/>
    <property type="match status" value="2"/>
</dbReference>
<dbReference type="HAMAP" id="MF_01304">
    <property type="entry name" value="UPF0194"/>
    <property type="match status" value="1"/>
</dbReference>
<dbReference type="InterPro" id="IPR032317">
    <property type="entry name" value="CusB_D23"/>
</dbReference>
<dbReference type="InterPro" id="IPR022936">
    <property type="entry name" value="UPF0194_membrane_YbhG"/>
</dbReference>
<dbReference type="InterPro" id="IPR050465">
    <property type="entry name" value="UPF0194_transport"/>
</dbReference>
<dbReference type="NCBIfam" id="NF002939">
    <property type="entry name" value="PRK03598.1"/>
    <property type="match status" value="1"/>
</dbReference>
<dbReference type="PANTHER" id="PTHR32347">
    <property type="entry name" value="EFFLUX SYSTEM COMPONENT YKNX-RELATED"/>
    <property type="match status" value="1"/>
</dbReference>
<dbReference type="PANTHER" id="PTHR32347:SF29">
    <property type="entry name" value="UPF0194 MEMBRANE PROTEIN YBHG"/>
    <property type="match status" value="1"/>
</dbReference>
<dbReference type="Pfam" id="PF16576">
    <property type="entry name" value="HlyD_D23"/>
    <property type="match status" value="1"/>
</dbReference>
<dbReference type="SUPFAM" id="SSF111369">
    <property type="entry name" value="HlyD-like secretion proteins"/>
    <property type="match status" value="3"/>
</dbReference>
<protein>
    <recommendedName>
        <fullName evidence="1">UPF0194 membrane protein YbhG</fullName>
    </recommendedName>
</protein>
<feature type="signal peptide" evidence="1">
    <location>
        <begin position="1"/>
        <end position="19"/>
    </location>
</feature>
<feature type="chain" id="PRO_1000140659" description="UPF0194 membrane protein YbhG">
    <location>
        <begin position="20"/>
        <end position="331"/>
    </location>
</feature>
<feature type="coiled-coil region" evidence="1">
    <location>
        <begin position="107"/>
        <end position="208"/>
    </location>
</feature>
<sequence>MKKPVVIGLAIAAIVAVIAGGTWWYQSRQDDGLTLYGNVDIRTVNISFRVGGRLASLNVDEGDAIKAGQVLGELDHAPYENALMQAKAGVSVAQAQYDLMLAGYRDEEIAQAAAAVRQAQAAYDYAQNFYNRQQGLWKSRTISANDLENARSSRDQAQATLKSAQDKLSQYRTGNREQDIAQAKASLEQAKAQLAQAQLDLQDTTLIAPANGTLLTRAVEPGSMLNAGSTVLTLSLTRPVWVRAYVDERNLSQTQPGRDILLYTDGRPDKPYHGKIGFVSPTAEFTPKTVETPDLRTDLVYRLRIIVTDADDALRQGMPVTVKFNDEARHE</sequence>
<evidence type="ECO:0000255" key="1">
    <source>
        <dbReference type="HAMAP-Rule" id="MF_01304"/>
    </source>
</evidence>
<name>YBHG_SALHS</name>
<proteinExistence type="inferred from homology"/>
<organism>
    <name type="scientific">Salmonella heidelberg (strain SL476)</name>
    <dbReference type="NCBI Taxonomy" id="454169"/>
    <lineage>
        <taxon>Bacteria</taxon>
        <taxon>Pseudomonadati</taxon>
        <taxon>Pseudomonadota</taxon>
        <taxon>Gammaproteobacteria</taxon>
        <taxon>Enterobacterales</taxon>
        <taxon>Enterobacteriaceae</taxon>
        <taxon>Salmonella</taxon>
    </lineage>
</organism>
<gene>
    <name evidence="1" type="primary">ybhG</name>
    <name type="ordered locus">SeHA_C0945</name>
</gene>
<accession>B4TC72</accession>
<comment type="subcellular location">
    <subcellularLocation>
        <location evidence="1">Periplasm</location>
    </subcellularLocation>
</comment>
<comment type="similarity">
    <text evidence="1">Belongs to the UPF0194 family.</text>
</comment>
<keyword id="KW-0175">Coiled coil</keyword>
<keyword id="KW-0574">Periplasm</keyword>
<keyword id="KW-0732">Signal</keyword>
<reference key="1">
    <citation type="journal article" date="2011" name="J. Bacteriol.">
        <title>Comparative genomics of 28 Salmonella enterica isolates: evidence for CRISPR-mediated adaptive sublineage evolution.</title>
        <authorList>
            <person name="Fricke W.F."/>
            <person name="Mammel M.K."/>
            <person name="McDermott P.F."/>
            <person name="Tartera C."/>
            <person name="White D.G."/>
            <person name="Leclerc J.E."/>
            <person name="Ravel J."/>
            <person name="Cebula T.A."/>
        </authorList>
    </citation>
    <scope>NUCLEOTIDE SEQUENCE [LARGE SCALE GENOMIC DNA]</scope>
    <source>
        <strain>SL476</strain>
    </source>
</reference>